<dbReference type="EC" id="2.1.1.181" evidence="1"/>
<dbReference type="EMBL" id="CP000946">
    <property type="protein sequence ID" value="ACA78464.1"/>
    <property type="molecule type" value="Genomic_DNA"/>
</dbReference>
<dbReference type="RefSeq" id="WP_001295299.1">
    <property type="nucleotide sequence ID" value="NZ_MTFT01000003.1"/>
</dbReference>
<dbReference type="SMR" id="B1IXG1"/>
<dbReference type="KEGG" id="ecl:EcolC_2836"/>
<dbReference type="HOGENOM" id="CLU_027534_3_0_6"/>
<dbReference type="GO" id="GO:0005737">
    <property type="term" value="C:cytoplasm"/>
    <property type="evidence" value="ECO:0007669"/>
    <property type="project" value="UniProtKB-SubCell"/>
</dbReference>
<dbReference type="GO" id="GO:0052907">
    <property type="term" value="F:23S rRNA (adenine(1618)-N(6))-methyltransferase activity"/>
    <property type="evidence" value="ECO:0007669"/>
    <property type="project" value="UniProtKB-EC"/>
</dbReference>
<dbReference type="GO" id="GO:0070475">
    <property type="term" value="P:rRNA base methylation"/>
    <property type="evidence" value="ECO:0007669"/>
    <property type="project" value="TreeGrafter"/>
</dbReference>
<dbReference type="FunFam" id="3.40.50.150:FF:000045">
    <property type="entry name" value="Ribosomal RNA large subunit methyltransferase F"/>
    <property type="match status" value="1"/>
</dbReference>
<dbReference type="Gene3D" id="3.40.50.150">
    <property type="entry name" value="Vaccinia Virus protein VP39"/>
    <property type="match status" value="1"/>
</dbReference>
<dbReference type="HAMAP" id="MF_01848">
    <property type="entry name" value="23SrRNA_methyltr_F"/>
    <property type="match status" value="1"/>
</dbReference>
<dbReference type="InterPro" id="IPR010286">
    <property type="entry name" value="METTL16/RlmF"/>
</dbReference>
<dbReference type="InterPro" id="IPR016909">
    <property type="entry name" value="rRNA_lsu_MeTfrase_F"/>
</dbReference>
<dbReference type="InterPro" id="IPR029063">
    <property type="entry name" value="SAM-dependent_MTases_sf"/>
</dbReference>
<dbReference type="NCBIfam" id="NF008725">
    <property type="entry name" value="PRK11727.1"/>
    <property type="match status" value="1"/>
</dbReference>
<dbReference type="PANTHER" id="PTHR13393:SF0">
    <property type="entry name" value="RNA N6-ADENOSINE-METHYLTRANSFERASE METTL16"/>
    <property type="match status" value="1"/>
</dbReference>
<dbReference type="PANTHER" id="PTHR13393">
    <property type="entry name" value="SAM-DEPENDENT METHYLTRANSFERASE"/>
    <property type="match status" value="1"/>
</dbReference>
<dbReference type="Pfam" id="PF05971">
    <property type="entry name" value="Methyltransf_10"/>
    <property type="match status" value="1"/>
</dbReference>
<dbReference type="PIRSF" id="PIRSF029038">
    <property type="entry name" value="Mtase_YbiN_prd"/>
    <property type="match status" value="1"/>
</dbReference>
<dbReference type="SUPFAM" id="SSF53335">
    <property type="entry name" value="S-adenosyl-L-methionine-dependent methyltransferases"/>
    <property type="match status" value="1"/>
</dbReference>
<sequence length="308" mass="34226">MSAQKPGLHPRNRHHSRYDLATLCQVNPELRQFLTLTPAGEQSVDFANPLAVKALNKALLAHFYAVANWDIPDGFLCPPVPGRADYIHHLADLLAEASGTIPANASILDIGVGANCIYPLIGVHEYGWRFTGSETSSQALSSAQAIISSNPGLNRAIRLRRQKESGAIFNGIIHKNEQYDATLCNPPFHDSAAAARAGSERKRRNLGLNKDDALNFGGQQQELWCEGGEVTFIKKMIEESKGFAKQVMWFTSLVSRGENLPPLYRALTDVGAVKVVKKEMAQGQKQSRFIAWTFMNDEQRRRFVNRQR</sequence>
<proteinExistence type="inferred from homology"/>
<name>RLMF_ECOLC</name>
<comment type="function">
    <text evidence="1">Specifically methylates the adenine in position 1618 of 23S rRNA.</text>
</comment>
<comment type="catalytic activity">
    <reaction evidence="1">
        <text>adenosine(1618) in 23S rRNA + S-adenosyl-L-methionine = N(6)-methyladenosine(1618) in 23S rRNA + S-adenosyl-L-homocysteine + H(+)</text>
        <dbReference type="Rhea" id="RHEA:16497"/>
        <dbReference type="Rhea" id="RHEA-COMP:10229"/>
        <dbReference type="Rhea" id="RHEA-COMP:10231"/>
        <dbReference type="ChEBI" id="CHEBI:15378"/>
        <dbReference type="ChEBI" id="CHEBI:57856"/>
        <dbReference type="ChEBI" id="CHEBI:59789"/>
        <dbReference type="ChEBI" id="CHEBI:74411"/>
        <dbReference type="ChEBI" id="CHEBI:74449"/>
        <dbReference type="EC" id="2.1.1.181"/>
    </reaction>
</comment>
<comment type="subcellular location">
    <subcellularLocation>
        <location evidence="1">Cytoplasm</location>
    </subcellularLocation>
</comment>
<comment type="similarity">
    <text evidence="1">Belongs to the methyltransferase superfamily. METTL16/RlmF family.</text>
</comment>
<evidence type="ECO:0000255" key="1">
    <source>
        <dbReference type="HAMAP-Rule" id="MF_01848"/>
    </source>
</evidence>
<gene>
    <name evidence="1" type="primary">rlmF</name>
    <name type="ordered locus">EcolC_2836</name>
</gene>
<reference key="1">
    <citation type="submission" date="2008-02" db="EMBL/GenBank/DDBJ databases">
        <title>Complete sequence of Escherichia coli C str. ATCC 8739.</title>
        <authorList>
            <person name="Copeland A."/>
            <person name="Lucas S."/>
            <person name="Lapidus A."/>
            <person name="Glavina del Rio T."/>
            <person name="Dalin E."/>
            <person name="Tice H."/>
            <person name="Bruce D."/>
            <person name="Goodwin L."/>
            <person name="Pitluck S."/>
            <person name="Kiss H."/>
            <person name="Brettin T."/>
            <person name="Detter J.C."/>
            <person name="Han C."/>
            <person name="Kuske C.R."/>
            <person name="Schmutz J."/>
            <person name="Larimer F."/>
            <person name="Land M."/>
            <person name="Hauser L."/>
            <person name="Kyrpides N."/>
            <person name="Mikhailova N."/>
            <person name="Ingram L."/>
            <person name="Richardson P."/>
        </authorList>
    </citation>
    <scope>NUCLEOTIDE SEQUENCE [LARGE SCALE GENOMIC DNA]</scope>
    <source>
        <strain>ATCC 8739 / DSM 1576 / NBRC 3972 / NCIMB 8545 / WDCM 00012 / Crooks</strain>
    </source>
</reference>
<keyword id="KW-0963">Cytoplasm</keyword>
<keyword id="KW-0489">Methyltransferase</keyword>
<keyword id="KW-0698">rRNA processing</keyword>
<keyword id="KW-0949">S-adenosyl-L-methionine</keyword>
<keyword id="KW-0808">Transferase</keyword>
<feature type="chain" id="PRO_0000349906" description="Ribosomal RNA large subunit methyltransferase F">
    <location>
        <begin position="1"/>
        <end position="308"/>
    </location>
</feature>
<accession>B1IXG1</accession>
<protein>
    <recommendedName>
        <fullName evidence="1">Ribosomal RNA large subunit methyltransferase F</fullName>
        <ecNumber evidence="1">2.1.1.181</ecNumber>
    </recommendedName>
    <alternativeName>
        <fullName evidence="1">23S rRNA mA1618 methyltransferase</fullName>
    </alternativeName>
    <alternativeName>
        <fullName evidence="1">rRNA adenine N-6-methyltransferase</fullName>
    </alternativeName>
</protein>
<organism>
    <name type="scientific">Escherichia coli (strain ATCC 8739 / DSM 1576 / NBRC 3972 / NCIMB 8545 / WDCM 00012 / Crooks)</name>
    <dbReference type="NCBI Taxonomy" id="481805"/>
    <lineage>
        <taxon>Bacteria</taxon>
        <taxon>Pseudomonadati</taxon>
        <taxon>Pseudomonadota</taxon>
        <taxon>Gammaproteobacteria</taxon>
        <taxon>Enterobacterales</taxon>
        <taxon>Enterobacteriaceae</taxon>
        <taxon>Escherichia</taxon>
    </lineage>
</organism>